<comment type="function">
    <text evidence="1">Catalyzes the methylthiolation of an aspartic acid residue of ribosomal protein uS12.</text>
</comment>
<comment type="catalytic activity">
    <reaction evidence="1">
        <text>L-aspartate(89)-[ribosomal protein uS12]-hydrogen + (sulfur carrier)-SH + AH2 + 2 S-adenosyl-L-methionine = 3-methylsulfanyl-L-aspartate(89)-[ribosomal protein uS12]-hydrogen + (sulfur carrier)-H + 5'-deoxyadenosine + L-methionine + A + S-adenosyl-L-homocysteine + 2 H(+)</text>
        <dbReference type="Rhea" id="RHEA:37087"/>
        <dbReference type="Rhea" id="RHEA-COMP:10460"/>
        <dbReference type="Rhea" id="RHEA-COMP:10461"/>
        <dbReference type="Rhea" id="RHEA-COMP:14737"/>
        <dbReference type="Rhea" id="RHEA-COMP:14739"/>
        <dbReference type="ChEBI" id="CHEBI:13193"/>
        <dbReference type="ChEBI" id="CHEBI:15378"/>
        <dbReference type="ChEBI" id="CHEBI:17319"/>
        <dbReference type="ChEBI" id="CHEBI:17499"/>
        <dbReference type="ChEBI" id="CHEBI:29917"/>
        <dbReference type="ChEBI" id="CHEBI:29961"/>
        <dbReference type="ChEBI" id="CHEBI:57844"/>
        <dbReference type="ChEBI" id="CHEBI:57856"/>
        <dbReference type="ChEBI" id="CHEBI:59789"/>
        <dbReference type="ChEBI" id="CHEBI:64428"/>
        <dbReference type="ChEBI" id="CHEBI:73599"/>
        <dbReference type="EC" id="2.8.4.4"/>
    </reaction>
</comment>
<comment type="cofactor">
    <cofactor evidence="1">
        <name>[4Fe-4S] cluster</name>
        <dbReference type="ChEBI" id="CHEBI:49883"/>
    </cofactor>
    <text evidence="1">Binds 2 [4Fe-4S] clusters. One cluster is coordinated with 3 cysteines and an exchangeable S-adenosyl-L-methionine.</text>
</comment>
<comment type="subcellular location">
    <subcellularLocation>
        <location evidence="1">Cytoplasm</location>
    </subcellularLocation>
</comment>
<comment type="similarity">
    <text evidence="1">Belongs to the methylthiotransferase family. RimO subfamily.</text>
</comment>
<organism>
    <name type="scientific">Lawsonia intracellularis (strain PHE/MN1-00)</name>
    <dbReference type="NCBI Taxonomy" id="363253"/>
    <lineage>
        <taxon>Bacteria</taxon>
        <taxon>Pseudomonadati</taxon>
        <taxon>Thermodesulfobacteriota</taxon>
        <taxon>Desulfovibrionia</taxon>
        <taxon>Desulfovibrionales</taxon>
        <taxon>Desulfovibrionaceae</taxon>
        <taxon>Lawsonia</taxon>
    </lineage>
</organism>
<keyword id="KW-0004">4Fe-4S</keyword>
<keyword id="KW-0963">Cytoplasm</keyword>
<keyword id="KW-0408">Iron</keyword>
<keyword id="KW-0411">Iron-sulfur</keyword>
<keyword id="KW-0479">Metal-binding</keyword>
<keyword id="KW-1185">Reference proteome</keyword>
<keyword id="KW-0949">S-adenosyl-L-methionine</keyword>
<keyword id="KW-0808">Transferase</keyword>
<reference key="1">
    <citation type="submission" date="2005-11" db="EMBL/GenBank/DDBJ databases">
        <title>The complete genome sequence of Lawsonia intracellularis: the causative agent of proliferative enteropathy.</title>
        <authorList>
            <person name="Kaur K."/>
            <person name="Zhang Q."/>
            <person name="Beckler D."/>
            <person name="Munir S."/>
            <person name="Li L."/>
            <person name="Kinsley K."/>
            <person name="Herron L."/>
            <person name="Peterson A."/>
            <person name="May B."/>
            <person name="Singh S."/>
            <person name="Gebhart C."/>
            <person name="Kapur V."/>
        </authorList>
    </citation>
    <scope>NUCLEOTIDE SEQUENCE [LARGE SCALE GENOMIC DNA]</scope>
    <source>
        <strain>PHE/MN1-00</strain>
    </source>
</reference>
<protein>
    <recommendedName>
        <fullName evidence="1">Ribosomal protein uS12 methylthiotransferase RimO</fullName>
        <shortName evidence="1">uS12 MTTase</shortName>
        <shortName evidence="1">uS12 methylthiotransferase</shortName>
        <ecNumber evidence="1">2.8.4.4</ecNumber>
    </recommendedName>
    <alternativeName>
        <fullName evidence="1">Ribosomal protein uS12 (aspartate-C(3))-methylthiotransferase</fullName>
    </alternativeName>
    <alternativeName>
        <fullName evidence="1">Ribosome maturation factor RimO</fullName>
    </alternativeName>
</protein>
<dbReference type="EC" id="2.8.4.4" evidence="1"/>
<dbReference type="EMBL" id="AM180252">
    <property type="protein sequence ID" value="CAJ54732.1"/>
    <property type="molecule type" value="Genomic_DNA"/>
</dbReference>
<dbReference type="RefSeq" id="WP_011526761.1">
    <property type="nucleotide sequence ID" value="NC_008011.1"/>
</dbReference>
<dbReference type="SMR" id="Q1MQJ5"/>
<dbReference type="STRING" id="363253.LI0678"/>
<dbReference type="KEGG" id="lip:LI0678"/>
<dbReference type="eggNOG" id="COG0621">
    <property type="taxonomic scope" value="Bacteria"/>
</dbReference>
<dbReference type="HOGENOM" id="CLU_018697_0_1_7"/>
<dbReference type="OrthoDB" id="9805215at2"/>
<dbReference type="Proteomes" id="UP000002430">
    <property type="component" value="Chromosome"/>
</dbReference>
<dbReference type="GO" id="GO:0005829">
    <property type="term" value="C:cytosol"/>
    <property type="evidence" value="ECO:0007669"/>
    <property type="project" value="TreeGrafter"/>
</dbReference>
<dbReference type="GO" id="GO:0051539">
    <property type="term" value="F:4 iron, 4 sulfur cluster binding"/>
    <property type="evidence" value="ECO:0007669"/>
    <property type="project" value="UniProtKB-UniRule"/>
</dbReference>
<dbReference type="GO" id="GO:0035599">
    <property type="term" value="F:aspartic acid methylthiotransferase activity"/>
    <property type="evidence" value="ECO:0007669"/>
    <property type="project" value="TreeGrafter"/>
</dbReference>
<dbReference type="GO" id="GO:0046872">
    <property type="term" value="F:metal ion binding"/>
    <property type="evidence" value="ECO:0007669"/>
    <property type="project" value="UniProtKB-KW"/>
</dbReference>
<dbReference type="GO" id="GO:0103039">
    <property type="term" value="F:protein methylthiotransferase activity"/>
    <property type="evidence" value="ECO:0007669"/>
    <property type="project" value="UniProtKB-EC"/>
</dbReference>
<dbReference type="GO" id="GO:0006400">
    <property type="term" value="P:tRNA modification"/>
    <property type="evidence" value="ECO:0007669"/>
    <property type="project" value="InterPro"/>
</dbReference>
<dbReference type="Gene3D" id="3.40.50.12160">
    <property type="entry name" value="Methylthiotransferase, N-terminal domain"/>
    <property type="match status" value="1"/>
</dbReference>
<dbReference type="Gene3D" id="2.40.50.140">
    <property type="entry name" value="Nucleic acid-binding proteins"/>
    <property type="match status" value="1"/>
</dbReference>
<dbReference type="Gene3D" id="3.80.30.20">
    <property type="entry name" value="tm_1862 like domain"/>
    <property type="match status" value="1"/>
</dbReference>
<dbReference type="HAMAP" id="MF_01865">
    <property type="entry name" value="MTTase_RimO"/>
    <property type="match status" value="1"/>
</dbReference>
<dbReference type="InterPro" id="IPR006638">
    <property type="entry name" value="Elp3/MiaA/NifB-like_rSAM"/>
</dbReference>
<dbReference type="InterPro" id="IPR005839">
    <property type="entry name" value="Methylthiotransferase"/>
</dbReference>
<dbReference type="InterPro" id="IPR020612">
    <property type="entry name" value="Methylthiotransferase_CS"/>
</dbReference>
<dbReference type="InterPro" id="IPR013848">
    <property type="entry name" value="Methylthiotransferase_N"/>
</dbReference>
<dbReference type="InterPro" id="IPR038135">
    <property type="entry name" value="Methylthiotransferase_N_sf"/>
</dbReference>
<dbReference type="InterPro" id="IPR012340">
    <property type="entry name" value="NA-bd_OB-fold"/>
</dbReference>
<dbReference type="InterPro" id="IPR005840">
    <property type="entry name" value="Ribosomal_uS12_MeSTrfase_RimO"/>
</dbReference>
<dbReference type="InterPro" id="IPR007197">
    <property type="entry name" value="rSAM"/>
</dbReference>
<dbReference type="InterPro" id="IPR023404">
    <property type="entry name" value="rSAM_horseshoe"/>
</dbReference>
<dbReference type="InterPro" id="IPR002792">
    <property type="entry name" value="TRAM_dom"/>
</dbReference>
<dbReference type="NCBIfam" id="TIGR01125">
    <property type="entry name" value="30S ribosomal protein S12 methylthiotransferase RimO"/>
    <property type="match status" value="1"/>
</dbReference>
<dbReference type="NCBIfam" id="TIGR00089">
    <property type="entry name" value="MiaB/RimO family radical SAM methylthiotransferase"/>
    <property type="match status" value="1"/>
</dbReference>
<dbReference type="PANTHER" id="PTHR43837">
    <property type="entry name" value="RIBOSOMAL PROTEIN S12 METHYLTHIOTRANSFERASE RIMO"/>
    <property type="match status" value="1"/>
</dbReference>
<dbReference type="PANTHER" id="PTHR43837:SF1">
    <property type="entry name" value="RIBOSOMAL PROTEIN US12 METHYLTHIOTRANSFERASE RIMO"/>
    <property type="match status" value="1"/>
</dbReference>
<dbReference type="Pfam" id="PF04055">
    <property type="entry name" value="Radical_SAM"/>
    <property type="match status" value="1"/>
</dbReference>
<dbReference type="Pfam" id="PF18693">
    <property type="entry name" value="TRAM_2"/>
    <property type="match status" value="1"/>
</dbReference>
<dbReference type="Pfam" id="PF00919">
    <property type="entry name" value="UPF0004"/>
    <property type="match status" value="1"/>
</dbReference>
<dbReference type="SFLD" id="SFLDG01082">
    <property type="entry name" value="B12-binding_domain_containing"/>
    <property type="match status" value="1"/>
</dbReference>
<dbReference type="SFLD" id="SFLDS00029">
    <property type="entry name" value="Radical_SAM"/>
    <property type="match status" value="1"/>
</dbReference>
<dbReference type="SFLD" id="SFLDF00274">
    <property type="entry name" value="ribosomal_protein_S12_methylth"/>
    <property type="match status" value="1"/>
</dbReference>
<dbReference type="SMART" id="SM00729">
    <property type="entry name" value="Elp3"/>
    <property type="match status" value="1"/>
</dbReference>
<dbReference type="SUPFAM" id="SSF102114">
    <property type="entry name" value="Radical SAM enzymes"/>
    <property type="match status" value="1"/>
</dbReference>
<dbReference type="PROSITE" id="PS51449">
    <property type="entry name" value="MTTASE_N"/>
    <property type="match status" value="1"/>
</dbReference>
<dbReference type="PROSITE" id="PS01278">
    <property type="entry name" value="MTTASE_RADICAL"/>
    <property type="match status" value="1"/>
</dbReference>
<dbReference type="PROSITE" id="PS51918">
    <property type="entry name" value="RADICAL_SAM"/>
    <property type="match status" value="1"/>
</dbReference>
<gene>
    <name evidence="1" type="primary">rimO</name>
    <name type="ordered locus">LI0678</name>
</gene>
<feature type="chain" id="PRO_0000374872" description="Ribosomal protein uS12 methylthiotransferase RimO">
    <location>
        <begin position="1"/>
        <end position="440"/>
    </location>
</feature>
<feature type="domain" description="MTTase N-terminal" evidence="1">
    <location>
        <begin position="8"/>
        <end position="125"/>
    </location>
</feature>
<feature type="domain" description="Radical SAM core" evidence="2">
    <location>
        <begin position="138"/>
        <end position="368"/>
    </location>
</feature>
<feature type="domain" description="TRAM" evidence="1">
    <location>
        <begin position="371"/>
        <end position="439"/>
    </location>
</feature>
<feature type="binding site" evidence="1">
    <location>
        <position position="17"/>
    </location>
    <ligand>
        <name>[4Fe-4S] cluster</name>
        <dbReference type="ChEBI" id="CHEBI:49883"/>
        <label>1</label>
    </ligand>
</feature>
<feature type="binding site" evidence="1">
    <location>
        <position position="52"/>
    </location>
    <ligand>
        <name>[4Fe-4S] cluster</name>
        <dbReference type="ChEBI" id="CHEBI:49883"/>
        <label>1</label>
    </ligand>
</feature>
<feature type="binding site" evidence="1">
    <location>
        <position position="87"/>
    </location>
    <ligand>
        <name>[4Fe-4S] cluster</name>
        <dbReference type="ChEBI" id="CHEBI:49883"/>
        <label>1</label>
    </ligand>
</feature>
<feature type="binding site" evidence="1">
    <location>
        <position position="152"/>
    </location>
    <ligand>
        <name>[4Fe-4S] cluster</name>
        <dbReference type="ChEBI" id="CHEBI:49883"/>
        <label>2</label>
        <note>4Fe-4S-S-AdoMet</note>
    </ligand>
</feature>
<feature type="binding site" evidence="1">
    <location>
        <position position="156"/>
    </location>
    <ligand>
        <name>[4Fe-4S] cluster</name>
        <dbReference type="ChEBI" id="CHEBI:49883"/>
        <label>2</label>
        <note>4Fe-4S-S-AdoMet</note>
    </ligand>
</feature>
<feature type="binding site" evidence="1">
    <location>
        <position position="159"/>
    </location>
    <ligand>
        <name>[4Fe-4S] cluster</name>
        <dbReference type="ChEBI" id="CHEBI:49883"/>
        <label>2</label>
        <note>4Fe-4S-S-AdoMet</note>
    </ligand>
</feature>
<evidence type="ECO:0000255" key="1">
    <source>
        <dbReference type="HAMAP-Rule" id="MF_01865"/>
    </source>
</evidence>
<evidence type="ECO:0000255" key="2">
    <source>
        <dbReference type="PROSITE-ProRule" id="PRU01266"/>
    </source>
</evidence>
<accession>Q1MQJ5</accession>
<name>RIMO_LAWIP</name>
<sequence length="440" mass="49631">MNSHSPSLRCHAISLGCPKNRVDTERLLGSLGIPLTFIDYPNNADFVFINTCSFIHTAVQESVNTILQLVADVEELSEKPFIIVAGCFVGRYGEKILKKDIPEVDLWLDNKEIESWNEQILLALNIKSTFLVTDRIITTGKSYAWLKISDGCQHSCSFCTIPSIRGSLHSYSIDELVKESRHILDQGVKELVLVAQDVTAWGRDLPNNYGLKTLLDHLLVLDGLKRLRLMYLYPTGLTKDFLLYLKSVGEPFVPYFDVPIQHAHPDILSCMGRPFAKNPRKVIDNIRSVFPEAVLRTSVITGFPGETEGHHVYLSKFIEEIKFQHLGIFSYVAEAGTPAAVMPNQVGEKVKEQRKAELMEIQLKISEKWLKNFVGKRLSLIVDNVHPEWPELYTGRAWFQAPEVDGMVYISGPNIKPGELIEADIMESHSYDLVALADSY</sequence>
<proteinExistence type="inferred from homology"/>